<protein>
    <recommendedName>
        <fullName evidence="1">Glutamate--tRNA ligase 1</fullName>
        <ecNumber evidence="1">6.1.1.17</ecNumber>
    </recommendedName>
    <alternativeName>
        <fullName evidence="1">Glutamyl-tRNA synthetase 1</fullName>
        <shortName evidence="1">GluRS 1</shortName>
    </alternativeName>
</protein>
<accession>Q8RB93</accession>
<keyword id="KW-0030">Aminoacyl-tRNA synthetase</keyword>
<keyword id="KW-0067">ATP-binding</keyword>
<keyword id="KW-0963">Cytoplasm</keyword>
<keyword id="KW-0436">Ligase</keyword>
<keyword id="KW-0547">Nucleotide-binding</keyword>
<keyword id="KW-0648">Protein biosynthesis</keyword>
<keyword id="KW-1185">Reference proteome</keyword>
<comment type="function">
    <text evidence="1">Catalyzes the attachment of glutamate to tRNA(Glu) in a two-step reaction: glutamate is first activated by ATP to form Glu-AMP and then transferred to the acceptor end of tRNA(Glu).</text>
</comment>
<comment type="catalytic activity">
    <reaction evidence="1">
        <text>tRNA(Glu) + L-glutamate + ATP = L-glutamyl-tRNA(Glu) + AMP + diphosphate</text>
        <dbReference type="Rhea" id="RHEA:23540"/>
        <dbReference type="Rhea" id="RHEA-COMP:9663"/>
        <dbReference type="Rhea" id="RHEA-COMP:9680"/>
        <dbReference type="ChEBI" id="CHEBI:29985"/>
        <dbReference type="ChEBI" id="CHEBI:30616"/>
        <dbReference type="ChEBI" id="CHEBI:33019"/>
        <dbReference type="ChEBI" id="CHEBI:78442"/>
        <dbReference type="ChEBI" id="CHEBI:78520"/>
        <dbReference type="ChEBI" id="CHEBI:456215"/>
        <dbReference type="EC" id="6.1.1.17"/>
    </reaction>
</comment>
<comment type="subunit">
    <text evidence="1">Monomer.</text>
</comment>
<comment type="subcellular location">
    <subcellularLocation>
        <location evidence="1">Cytoplasm</location>
    </subcellularLocation>
</comment>
<comment type="similarity">
    <text evidence="1">Belongs to the class-I aminoacyl-tRNA synthetase family. Glutamate--tRNA ligase type 1 subfamily.</text>
</comment>
<reference key="1">
    <citation type="journal article" date="2002" name="Genome Res.">
        <title>A complete sequence of the T. tengcongensis genome.</title>
        <authorList>
            <person name="Bao Q."/>
            <person name="Tian Y."/>
            <person name="Li W."/>
            <person name="Xu Z."/>
            <person name="Xuan Z."/>
            <person name="Hu S."/>
            <person name="Dong W."/>
            <person name="Yang J."/>
            <person name="Chen Y."/>
            <person name="Xue Y."/>
            <person name="Xu Y."/>
            <person name="Lai X."/>
            <person name="Huang L."/>
            <person name="Dong X."/>
            <person name="Ma Y."/>
            <person name="Ling L."/>
            <person name="Tan H."/>
            <person name="Chen R."/>
            <person name="Wang J."/>
            <person name="Yu J."/>
            <person name="Yang H."/>
        </authorList>
    </citation>
    <scope>NUCLEOTIDE SEQUENCE [LARGE SCALE GENOMIC DNA]</scope>
    <source>
        <strain>DSM 15242 / JCM 11007 / NBRC 100824 / MB4</strain>
    </source>
</reference>
<sequence length="481" mass="55544">MMSEVRVRFAPSPTGSLHIGGARTALFNWLFARHHGGKFILRVDDTDLERSTEESMRGILEGLQWLGIDWDEGPIYQSQRLDEYRKFANKLLEEGKAYYCFCTKEELEEMRKQAEREGRPFMYTGKCRNLTKEQIENYLKEGKKPVIRLKTPREGKTVVHDIIRGDVEFDNSTIDDFIIMKSDGMPTYNFATVVDDYQMGITHIIRAEEHLSNTPKQILIYEALGVPLPQFAHVSMVLAPDRTKLSKRHGATSVQEFRDQGYLPEAIVNYITLLGWAPLDGEEIFDVRKSIREFSLERVSKNPAVYDVQKLTWINGHYIRSYDLDKLTQAIIPFLQKKGLIGENYDYEYIKKIVSVVREREKTLVDIADAMTYYFKEVESYEEKGVQKYFTKEGVVDILKKAAETLKNLEPFNKFTAEEAYRKLVEELGISSSALFHPTRLAISGRTFGPGLFDIMEFLGKEKTVARIERAIKFIEENIKG</sequence>
<proteinExistence type="inferred from homology"/>
<feature type="chain" id="PRO_0000119684" description="Glutamate--tRNA ligase 1">
    <location>
        <begin position="1"/>
        <end position="481"/>
    </location>
</feature>
<feature type="short sequence motif" description="'HIGH' region" evidence="1">
    <location>
        <begin position="11"/>
        <end position="21"/>
    </location>
</feature>
<feature type="short sequence motif" description="'KMSKS' region" evidence="1">
    <location>
        <begin position="244"/>
        <end position="248"/>
    </location>
</feature>
<feature type="binding site" evidence="1">
    <location>
        <position position="247"/>
    </location>
    <ligand>
        <name>ATP</name>
        <dbReference type="ChEBI" id="CHEBI:30616"/>
    </ligand>
</feature>
<name>SYE1_CALS4</name>
<organism>
    <name type="scientific">Caldanaerobacter subterraneus subsp. tengcongensis (strain DSM 15242 / JCM 11007 / NBRC 100824 / MB4)</name>
    <name type="common">Thermoanaerobacter tengcongensis</name>
    <dbReference type="NCBI Taxonomy" id="273068"/>
    <lineage>
        <taxon>Bacteria</taxon>
        <taxon>Bacillati</taxon>
        <taxon>Bacillota</taxon>
        <taxon>Clostridia</taxon>
        <taxon>Thermoanaerobacterales</taxon>
        <taxon>Thermoanaerobacteraceae</taxon>
        <taxon>Caldanaerobacter</taxon>
    </lineage>
</organism>
<evidence type="ECO:0000255" key="1">
    <source>
        <dbReference type="HAMAP-Rule" id="MF_00022"/>
    </source>
</evidence>
<dbReference type="EC" id="6.1.1.17" evidence="1"/>
<dbReference type="EMBL" id="AE008691">
    <property type="protein sequence ID" value="AAM24185.1"/>
    <property type="molecule type" value="Genomic_DNA"/>
</dbReference>
<dbReference type="SMR" id="Q8RB93"/>
<dbReference type="STRING" id="273068.TTE0929"/>
<dbReference type="KEGG" id="tte:TTE0929"/>
<dbReference type="eggNOG" id="COG0008">
    <property type="taxonomic scope" value="Bacteria"/>
</dbReference>
<dbReference type="HOGENOM" id="CLU_015768_6_3_9"/>
<dbReference type="Proteomes" id="UP000000555">
    <property type="component" value="Chromosome"/>
</dbReference>
<dbReference type="GO" id="GO:0005829">
    <property type="term" value="C:cytosol"/>
    <property type="evidence" value="ECO:0007669"/>
    <property type="project" value="TreeGrafter"/>
</dbReference>
<dbReference type="GO" id="GO:0005524">
    <property type="term" value="F:ATP binding"/>
    <property type="evidence" value="ECO:0007669"/>
    <property type="project" value="UniProtKB-UniRule"/>
</dbReference>
<dbReference type="GO" id="GO:0004818">
    <property type="term" value="F:glutamate-tRNA ligase activity"/>
    <property type="evidence" value="ECO:0007669"/>
    <property type="project" value="UniProtKB-UniRule"/>
</dbReference>
<dbReference type="GO" id="GO:0000049">
    <property type="term" value="F:tRNA binding"/>
    <property type="evidence" value="ECO:0007669"/>
    <property type="project" value="InterPro"/>
</dbReference>
<dbReference type="GO" id="GO:0008270">
    <property type="term" value="F:zinc ion binding"/>
    <property type="evidence" value="ECO:0007669"/>
    <property type="project" value="InterPro"/>
</dbReference>
<dbReference type="GO" id="GO:0006424">
    <property type="term" value="P:glutamyl-tRNA aminoacylation"/>
    <property type="evidence" value="ECO:0007669"/>
    <property type="project" value="UniProtKB-UniRule"/>
</dbReference>
<dbReference type="CDD" id="cd00808">
    <property type="entry name" value="GluRS_core"/>
    <property type="match status" value="1"/>
</dbReference>
<dbReference type="FunFam" id="3.40.50.620:FF:000007">
    <property type="entry name" value="Glutamate--tRNA ligase"/>
    <property type="match status" value="1"/>
</dbReference>
<dbReference type="Gene3D" id="1.10.10.350">
    <property type="match status" value="1"/>
</dbReference>
<dbReference type="Gene3D" id="1.10.8.70">
    <property type="entry name" value="Glutamate-tRNA synthetase, class I, anticodon-binding domain 1"/>
    <property type="match status" value="1"/>
</dbReference>
<dbReference type="Gene3D" id="3.40.50.620">
    <property type="entry name" value="HUPs"/>
    <property type="match status" value="1"/>
</dbReference>
<dbReference type="HAMAP" id="MF_00022">
    <property type="entry name" value="Glu_tRNA_synth_type1"/>
    <property type="match status" value="1"/>
</dbReference>
<dbReference type="InterPro" id="IPR045462">
    <property type="entry name" value="aa-tRNA-synth_I_cd-bd"/>
</dbReference>
<dbReference type="InterPro" id="IPR020751">
    <property type="entry name" value="aa-tRNA-synth_I_codon-bd_sub2"/>
</dbReference>
<dbReference type="InterPro" id="IPR001412">
    <property type="entry name" value="aa-tRNA-synth_I_CS"/>
</dbReference>
<dbReference type="InterPro" id="IPR008925">
    <property type="entry name" value="aa_tRNA-synth_I_cd-bd_sf"/>
</dbReference>
<dbReference type="InterPro" id="IPR004527">
    <property type="entry name" value="Glu-tRNA-ligase_bac/mito"/>
</dbReference>
<dbReference type="InterPro" id="IPR020752">
    <property type="entry name" value="Glu-tRNA-synth_I_codon-bd_sub1"/>
</dbReference>
<dbReference type="InterPro" id="IPR000924">
    <property type="entry name" value="Glu/Gln-tRNA-synth"/>
</dbReference>
<dbReference type="InterPro" id="IPR020058">
    <property type="entry name" value="Glu/Gln-tRNA-synth_Ib_cat-dom"/>
</dbReference>
<dbReference type="InterPro" id="IPR049940">
    <property type="entry name" value="GluQ/Sye"/>
</dbReference>
<dbReference type="InterPro" id="IPR033910">
    <property type="entry name" value="GluRS_core"/>
</dbReference>
<dbReference type="InterPro" id="IPR014729">
    <property type="entry name" value="Rossmann-like_a/b/a_fold"/>
</dbReference>
<dbReference type="NCBIfam" id="TIGR00464">
    <property type="entry name" value="gltX_bact"/>
    <property type="match status" value="1"/>
</dbReference>
<dbReference type="NCBIfam" id="NF004315">
    <property type="entry name" value="PRK05710.1-4"/>
    <property type="match status" value="1"/>
</dbReference>
<dbReference type="PANTHER" id="PTHR43311">
    <property type="entry name" value="GLUTAMATE--TRNA LIGASE"/>
    <property type="match status" value="1"/>
</dbReference>
<dbReference type="PANTHER" id="PTHR43311:SF2">
    <property type="entry name" value="GLUTAMATE--TRNA LIGASE, MITOCHONDRIAL-RELATED"/>
    <property type="match status" value="1"/>
</dbReference>
<dbReference type="Pfam" id="PF19269">
    <property type="entry name" value="Anticodon_2"/>
    <property type="match status" value="1"/>
</dbReference>
<dbReference type="Pfam" id="PF00749">
    <property type="entry name" value="tRNA-synt_1c"/>
    <property type="match status" value="1"/>
</dbReference>
<dbReference type="PRINTS" id="PR00987">
    <property type="entry name" value="TRNASYNTHGLU"/>
</dbReference>
<dbReference type="SUPFAM" id="SSF48163">
    <property type="entry name" value="An anticodon-binding domain of class I aminoacyl-tRNA synthetases"/>
    <property type="match status" value="1"/>
</dbReference>
<dbReference type="SUPFAM" id="SSF52374">
    <property type="entry name" value="Nucleotidylyl transferase"/>
    <property type="match status" value="1"/>
</dbReference>
<dbReference type="PROSITE" id="PS00178">
    <property type="entry name" value="AA_TRNA_LIGASE_I"/>
    <property type="match status" value="1"/>
</dbReference>
<gene>
    <name evidence="1" type="primary">gltX1</name>
    <name type="ordered locus">TTE0929</name>
</gene>